<accession>D3YXK2</accession>
<keyword id="KW-0007">Acetylation</keyword>
<keyword id="KW-0175">Coiled coil</keyword>
<keyword id="KW-0238">DNA-binding</keyword>
<keyword id="KW-1017">Isopeptide bond</keyword>
<keyword id="KW-0488">Methylation</keyword>
<keyword id="KW-0539">Nucleus</keyword>
<keyword id="KW-0597">Phosphoprotein</keyword>
<keyword id="KW-1185">Reference proteome</keyword>
<keyword id="KW-0678">Repressor</keyword>
<keyword id="KW-0694">RNA-binding</keyword>
<keyword id="KW-0804">Transcription</keyword>
<keyword id="KW-0805">Transcription regulation</keyword>
<keyword id="KW-0832">Ubl conjugation</keyword>
<dbReference type="EMBL" id="CT485788">
    <property type="status" value="NOT_ANNOTATED_CDS"/>
    <property type="molecule type" value="Genomic_DNA"/>
</dbReference>
<dbReference type="EMBL" id="CH466537">
    <property type="protein sequence ID" value="EDL38175.1"/>
    <property type="molecule type" value="Genomic_DNA"/>
</dbReference>
<dbReference type="EMBL" id="BC018200">
    <property type="status" value="NOT_ANNOTATED_CDS"/>
    <property type="molecule type" value="mRNA"/>
</dbReference>
<dbReference type="EMBL" id="AK087504">
    <property type="status" value="NOT_ANNOTATED_CDS"/>
    <property type="molecule type" value="mRNA"/>
</dbReference>
<dbReference type="CCDS" id="CCDS50152.1"/>
<dbReference type="RefSeq" id="NP_001156772.1">
    <property type="nucleotide sequence ID" value="NM_001163300.1"/>
</dbReference>
<dbReference type="SMR" id="D3YXK2"/>
<dbReference type="BioGRID" id="230338">
    <property type="interactions" value="15"/>
</dbReference>
<dbReference type="FunCoup" id="D3YXK2">
    <property type="interactions" value="3513"/>
</dbReference>
<dbReference type="IntAct" id="D3YXK2">
    <property type="interactions" value="9"/>
</dbReference>
<dbReference type="MINT" id="D3YXK2"/>
<dbReference type="STRING" id="10090.ENSMUSP00000092849"/>
<dbReference type="GlyGen" id="D3YXK2">
    <property type="glycosylation" value="1 site, 1 O-linked glycan (1 site)"/>
</dbReference>
<dbReference type="iPTMnet" id="D3YXK2"/>
<dbReference type="PhosphoSitePlus" id="D3YXK2"/>
<dbReference type="SwissPalm" id="D3YXK2"/>
<dbReference type="jPOST" id="D3YXK2"/>
<dbReference type="PaxDb" id="10090-ENSMUSP00000092849"/>
<dbReference type="PeptideAtlas" id="D3YXK2"/>
<dbReference type="ProteomicsDB" id="260821"/>
<dbReference type="Pumba" id="D3YXK2"/>
<dbReference type="Antibodypedia" id="4536">
    <property type="antibodies" value="308 antibodies from 32 providers"/>
</dbReference>
<dbReference type="Ensembl" id="ENSMUST00000095224.11">
    <property type="protein sequence ID" value="ENSMUSP00000092849.4"/>
    <property type="gene ID" value="ENSMUSG00000071054.13"/>
</dbReference>
<dbReference type="GeneID" id="224903"/>
<dbReference type="KEGG" id="mmu:224903"/>
<dbReference type="UCSC" id="uc012avv.1">
    <property type="organism name" value="mouse"/>
</dbReference>
<dbReference type="AGR" id="MGI:2146974"/>
<dbReference type="CTD" id="6294"/>
<dbReference type="MGI" id="MGI:2146974">
    <property type="gene designation" value="Safb"/>
</dbReference>
<dbReference type="VEuPathDB" id="HostDB:ENSMUSG00000071054"/>
<dbReference type="eggNOG" id="KOG4661">
    <property type="taxonomic scope" value="Eukaryota"/>
</dbReference>
<dbReference type="GeneTree" id="ENSGT00940000155916"/>
<dbReference type="InParanoid" id="D3YXK2"/>
<dbReference type="PhylomeDB" id="D3YXK2"/>
<dbReference type="TreeFam" id="TF325240"/>
<dbReference type="Reactome" id="R-MMU-3899300">
    <property type="pathway name" value="SUMOylation of transcription cofactors"/>
</dbReference>
<dbReference type="BioGRID-ORCS" id="224903">
    <property type="hits" value="8 hits in 82 CRISPR screens"/>
</dbReference>
<dbReference type="ChiTaRS" id="Safb">
    <property type="organism name" value="mouse"/>
</dbReference>
<dbReference type="PRO" id="PR:D3YXK2"/>
<dbReference type="Proteomes" id="UP000000589">
    <property type="component" value="Chromosome 17"/>
</dbReference>
<dbReference type="RNAct" id="D3YXK2">
    <property type="molecule type" value="protein"/>
</dbReference>
<dbReference type="Bgee" id="ENSMUSG00000071054">
    <property type="expression patterns" value="Expressed in retinal neural layer and 265 other cell types or tissues"/>
</dbReference>
<dbReference type="ExpressionAtlas" id="D3YXK2">
    <property type="expression patterns" value="baseline and differential"/>
</dbReference>
<dbReference type="GO" id="GO:0005634">
    <property type="term" value="C:nucleus"/>
    <property type="evidence" value="ECO:0000250"/>
    <property type="project" value="UniProtKB"/>
</dbReference>
<dbReference type="GO" id="GO:0003682">
    <property type="term" value="F:chromatin binding"/>
    <property type="evidence" value="ECO:0000314"/>
    <property type="project" value="UniProtKB"/>
</dbReference>
<dbReference type="GO" id="GO:0003723">
    <property type="term" value="F:RNA binding"/>
    <property type="evidence" value="ECO:0007669"/>
    <property type="project" value="UniProtKB-KW"/>
</dbReference>
<dbReference type="GO" id="GO:0000978">
    <property type="term" value="F:RNA polymerase II cis-regulatory region sequence-specific DNA binding"/>
    <property type="evidence" value="ECO:0000314"/>
    <property type="project" value="UniProtKB"/>
</dbReference>
<dbReference type="GO" id="GO:0030520">
    <property type="term" value="P:estrogen receptor signaling pathway"/>
    <property type="evidence" value="ECO:0000315"/>
    <property type="project" value="MGI"/>
</dbReference>
<dbReference type="GO" id="GO:0042445">
    <property type="term" value="P:hormone metabolic process"/>
    <property type="evidence" value="ECO:0000315"/>
    <property type="project" value="MGI"/>
</dbReference>
<dbReference type="GO" id="GO:0045944">
    <property type="term" value="P:positive regulation of transcription by RNA polymerase II"/>
    <property type="evidence" value="ECO:0000315"/>
    <property type="project" value="UniProtKB"/>
</dbReference>
<dbReference type="GO" id="GO:0040008">
    <property type="term" value="P:regulation of growth"/>
    <property type="evidence" value="ECO:0000315"/>
    <property type="project" value="MGI"/>
</dbReference>
<dbReference type="CDD" id="cd12679">
    <property type="entry name" value="RRM_SAFB1_SAFB2"/>
    <property type="match status" value="1"/>
</dbReference>
<dbReference type="FunFam" id="3.30.70.330:FF:000197">
    <property type="entry name" value="Scaffold attachment factor B2"/>
    <property type="match status" value="1"/>
</dbReference>
<dbReference type="FunFam" id="1.10.720.30:FF:000005">
    <property type="entry name" value="scaffold attachment factor B2 isoform X1"/>
    <property type="match status" value="1"/>
</dbReference>
<dbReference type="Gene3D" id="3.30.70.330">
    <property type="match status" value="1"/>
</dbReference>
<dbReference type="Gene3D" id="1.10.720.30">
    <property type="entry name" value="SAP domain"/>
    <property type="match status" value="1"/>
</dbReference>
<dbReference type="InterPro" id="IPR012677">
    <property type="entry name" value="Nucleotide-bd_a/b_plait_sf"/>
</dbReference>
<dbReference type="InterPro" id="IPR035979">
    <property type="entry name" value="RBD_domain_sf"/>
</dbReference>
<dbReference type="InterPro" id="IPR000504">
    <property type="entry name" value="RRM_dom"/>
</dbReference>
<dbReference type="InterPro" id="IPR051738">
    <property type="entry name" value="SAF_Modulators"/>
</dbReference>
<dbReference type="InterPro" id="IPR034781">
    <property type="entry name" value="SAFB1_2_RBD"/>
</dbReference>
<dbReference type="InterPro" id="IPR003034">
    <property type="entry name" value="SAP_dom"/>
</dbReference>
<dbReference type="InterPro" id="IPR036361">
    <property type="entry name" value="SAP_dom_sf"/>
</dbReference>
<dbReference type="PANTHER" id="PTHR15683">
    <property type="entry name" value="SCAFFOLD ATTACHMENT FACTOR B-RELATED"/>
    <property type="match status" value="1"/>
</dbReference>
<dbReference type="PANTHER" id="PTHR15683:SF6">
    <property type="entry name" value="SCAFFOLD ATTACHMENT FACTOR B1"/>
    <property type="match status" value="1"/>
</dbReference>
<dbReference type="Pfam" id="PF00076">
    <property type="entry name" value="RRM_1"/>
    <property type="match status" value="1"/>
</dbReference>
<dbReference type="Pfam" id="PF02037">
    <property type="entry name" value="SAP"/>
    <property type="match status" value="1"/>
</dbReference>
<dbReference type="SMART" id="SM00360">
    <property type="entry name" value="RRM"/>
    <property type="match status" value="1"/>
</dbReference>
<dbReference type="SMART" id="SM00513">
    <property type="entry name" value="SAP"/>
    <property type="match status" value="1"/>
</dbReference>
<dbReference type="SUPFAM" id="SSF54928">
    <property type="entry name" value="RNA-binding domain, RBD"/>
    <property type="match status" value="1"/>
</dbReference>
<dbReference type="SUPFAM" id="SSF68906">
    <property type="entry name" value="SAP domain"/>
    <property type="match status" value="1"/>
</dbReference>
<dbReference type="PROSITE" id="PS50102">
    <property type="entry name" value="RRM"/>
    <property type="match status" value="1"/>
</dbReference>
<dbReference type="PROSITE" id="PS50800">
    <property type="entry name" value="SAP"/>
    <property type="match status" value="1"/>
</dbReference>
<gene>
    <name type="primary">Safb</name>
    <name type="synonym">Safb1</name>
</gene>
<name>SAFB1_MOUSE</name>
<comment type="function">
    <text evidence="3 9">Binds to scaffold/matrix attachment region (S/MAR) DNA and forms a molecular assembly point to allow the formation of a 'transcriptosomal' complex (consisting of SR proteins and RNA polymerase II) coupling transcription and RNA processing (By similarity). Functions as an estrogen receptor corepressor and can also bind to the HSP27 promoter and decrease its transcription (By similarity). Thereby acts as a negative regulator of cell proliferation (By similarity). When associated with RBMX, binds to and stimulates transcription from the SREBF1 promoter (PubMed:19403048).</text>
</comment>
<comment type="subunit">
    <text evidence="2 3 8 9">Monomer and homodimer (By similarity). Forms heterodimers with SAFB2 (By similarity). Interacts with KHDRBS3 (By similarity). Interacts with CLK2 (PubMed:11118435). Interacts with POLR2A, ASF/SRSF1, SRp30c/SRFS9 and TRA2B/SFRS10 (By similarity). Interacts with SRPK1 and inhibits its activity (By similarity). Interacts with RBMX (PubMed:19403048). Interacts with FUS (By similarity). Interacts with ZBED4 (By similarity).</text>
</comment>
<comment type="subcellular location">
    <subcellularLocation>
        <location evidence="3">Nucleus</location>
    </subcellularLocation>
</comment>
<comment type="PTM">
    <text evidence="3">Sumoylated by PIAS1 with SUMO1 and SUMO2/3, desumoylated by SENP1. Sumoylation is required for transcriptional repressor activity.</text>
</comment>
<evidence type="ECO:0000250" key="1"/>
<evidence type="ECO:0000250" key="2">
    <source>
        <dbReference type="UniProtKB" id="O88453"/>
    </source>
</evidence>
<evidence type="ECO:0000250" key="3">
    <source>
        <dbReference type="UniProtKB" id="Q15424"/>
    </source>
</evidence>
<evidence type="ECO:0000255" key="4"/>
<evidence type="ECO:0000255" key="5">
    <source>
        <dbReference type="PROSITE-ProRule" id="PRU00176"/>
    </source>
</evidence>
<evidence type="ECO:0000255" key="6">
    <source>
        <dbReference type="PROSITE-ProRule" id="PRU00186"/>
    </source>
</evidence>
<evidence type="ECO:0000256" key="7">
    <source>
        <dbReference type="SAM" id="MobiDB-lite"/>
    </source>
</evidence>
<evidence type="ECO:0000269" key="8">
    <source>
    </source>
</evidence>
<evidence type="ECO:0000269" key="9">
    <source>
    </source>
</evidence>
<evidence type="ECO:0007744" key="10">
    <source>
    </source>
</evidence>
<evidence type="ECO:0007744" key="11">
    <source>
    </source>
</evidence>
<evidence type="ECO:0007744" key="12">
    <source>
    </source>
</evidence>
<evidence type="ECO:0007744" key="13">
    <source>
    </source>
</evidence>
<organism>
    <name type="scientific">Mus musculus</name>
    <name type="common">Mouse</name>
    <dbReference type="NCBI Taxonomy" id="10090"/>
    <lineage>
        <taxon>Eukaryota</taxon>
        <taxon>Metazoa</taxon>
        <taxon>Chordata</taxon>
        <taxon>Craniata</taxon>
        <taxon>Vertebrata</taxon>
        <taxon>Euteleostomi</taxon>
        <taxon>Mammalia</taxon>
        <taxon>Eutheria</taxon>
        <taxon>Euarchontoglires</taxon>
        <taxon>Glires</taxon>
        <taxon>Rodentia</taxon>
        <taxon>Myomorpha</taxon>
        <taxon>Muroidea</taxon>
        <taxon>Muridae</taxon>
        <taxon>Murinae</taxon>
        <taxon>Mus</taxon>
        <taxon>Mus</taxon>
    </lineage>
</organism>
<reference key="1">
    <citation type="journal article" date="2009" name="PLoS Biol.">
        <title>Lineage-specific biology revealed by a finished genome assembly of the mouse.</title>
        <authorList>
            <person name="Church D.M."/>
            <person name="Goodstadt L."/>
            <person name="Hillier L.W."/>
            <person name="Zody M.C."/>
            <person name="Goldstein S."/>
            <person name="She X."/>
            <person name="Bult C.J."/>
            <person name="Agarwala R."/>
            <person name="Cherry J.L."/>
            <person name="DiCuccio M."/>
            <person name="Hlavina W."/>
            <person name="Kapustin Y."/>
            <person name="Meric P."/>
            <person name="Maglott D."/>
            <person name="Birtle Z."/>
            <person name="Marques A.C."/>
            <person name="Graves T."/>
            <person name="Zhou S."/>
            <person name="Teague B."/>
            <person name="Potamousis K."/>
            <person name="Churas C."/>
            <person name="Place M."/>
            <person name="Herschleb J."/>
            <person name="Runnheim R."/>
            <person name="Forrest D."/>
            <person name="Amos-Landgraf J."/>
            <person name="Schwartz D.C."/>
            <person name="Cheng Z."/>
            <person name="Lindblad-Toh K."/>
            <person name="Eichler E.E."/>
            <person name="Ponting C.P."/>
        </authorList>
    </citation>
    <scope>NUCLEOTIDE SEQUENCE [LARGE SCALE GENOMIC DNA]</scope>
    <source>
        <strain>C57BL/6J</strain>
    </source>
</reference>
<reference key="2">
    <citation type="submission" date="2005-07" db="EMBL/GenBank/DDBJ databases">
        <authorList>
            <person name="Mural R.J."/>
            <person name="Adams M.D."/>
            <person name="Myers E.W."/>
            <person name="Smith H.O."/>
            <person name="Venter J.C."/>
        </authorList>
    </citation>
    <scope>NUCLEOTIDE SEQUENCE [LARGE SCALE GENOMIC DNA]</scope>
</reference>
<reference key="3">
    <citation type="journal article" date="2004" name="Genome Res.">
        <title>The status, quality, and expansion of the NIH full-length cDNA project: the Mammalian Gene Collection (MGC).</title>
        <authorList>
            <consortium name="The MGC Project Team"/>
        </authorList>
    </citation>
    <scope>NUCLEOTIDE SEQUENCE [LARGE SCALE MRNA] OF 1-203</scope>
    <source>
        <tissue>Mammary tumor</tissue>
    </source>
</reference>
<reference key="4">
    <citation type="journal article" date="2005" name="Science">
        <title>The transcriptional landscape of the mammalian genome.</title>
        <authorList>
            <person name="Carninci P."/>
            <person name="Kasukawa T."/>
            <person name="Katayama S."/>
            <person name="Gough J."/>
            <person name="Frith M.C."/>
            <person name="Maeda N."/>
            <person name="Oyama R."/>
            <person name="Ravasi T."/>
            <person name="Lenhard B."/>
            <person name="Wells C."/>
            <person name="Kodzius R."/>
            <person name="Shimokawa K."/>
            <person name="Bajic V.B."/>
            <person name="Brenner S.E."/>
            <person name="Batalov S."/>
            <person name="Forrest A.R."/>
            <person name="Zavolan M."/>
            <person name="Davis M.J."/>
            <person name="Wilming L.G."/>
            <person name="Aidinis V."/>
            <person name="Allen J.E."/>
            <person name="Ambesi-Impiombato A."/>
            <person name="Apweiler R."/>
            <person name="Aturaliya R.N."/>
            <person name="Bailey T.L."/>
            <person name="Bansal M."/>
            <person name="Baxter L."/>
            <person name="Beisel K.W."/>
            <person name="Bersano T."/>
            <person name="Bono H."/>
            <person name="Chalk A.M."/>
            <person name="Chiu K.P."/>
            <person name="Choudhary V."/>
            <person name="Christoffels A."/>
            <person name="Clutterbuck D.R."/>
            <person name="Crowe M.L."/>
            <person name="Dalla E."/>
            <person name="Dalrymple B.P."/>
            <person name="de Bono B."/>
            <person name="Della Gatta G."/>
            <person name="di Bernardo D."/>
            <person name="Down T."/>
            <person name="Engstrom P."/>
            <person name="Fagiolini M."/>
            <person name="Faulkner G."/>
            <person name="Fletcher C.F."/>
            <person name="Fukushima T."/>
            <person name="Furuno M."/>
            <person name="Futaki S."/>
            <person name="Gariboldi M."/>
            <person name="Georgii-Hemming P."/>
            <person name="Gingeras T.R."/>
            <person name="Gojobori T."/>
            <person name="Green R.E."/>
            <person name="Gustincich S."/>
            <person name="Harbers M."/>
            <person name="Hayashi Y."/>
            <person name="Hensch T.K."/>
            <person name="Hirokawa N."/>
            <person name="Hill D."/>
            <person name="Huminiecki L."/>
            <person name="Iacono M."/>
            <person name="Ikeo K."/>
            <person name="Iwama A."/>
            <person name="Ishikawa T."/>
            <person name="Jakt M."/>
            <person name="Kanapin A."/>
            <person name="Katoh M."/>
            <person name="Kawasawa Y."/>
            <person name="Kelso J."/>
            <person name="Kitamura H."/>
            <person name="Kitano H."/>
            <person name="Kollias G."/>
            <person name="Krishnan S.P."/>
            <person name="Kruger A."/>
            <person name="Kummerfeld S.K."/>
            <person name="Kurochkin I.V."/>
            <person name="Lareau L.F."/>
            <person name="Lazarevic D."/>
            <person name="Lipovich L."/>
            <person name="Liu J."/>
            <person name="Liuni S."/>
            <person name="McWilliam S."/>
            <person name="Madan Babu M."/>
            <person name="Madera M."/>
            <person name="Marchionni L."/>
            <person name="Matsuda H."/>
            <person name="Matsuzawa S."/>
            <person name="Miki H."/>
            <person name="Mignone F."/>
            <person name="Miyake S."/>
            <person name="Morris K."/>
            <person name="Mottagui-Tabar S."/>
            <person name="Mulder N."/>
            <person name="Nakano N."/>
            <person name="Nakauchi H."/>
            <person name="Ng P."/>
            <person name="Nilsson R."/>
            <person name="Nishiguchi S."/>
            <person name="Nishikawa S."/>
            <person name="Nori F."/>
            <person name="Ohara O."/>
            <person name="Okazaki Y."/>
            <person name="Orlando V."/>
            <person name="Pang K.C."/>
            <person name="Pavan W.J."/>
            <person name="Pavesi G."/>
            <person name="Pesole G."/>
            <person name="Petrovsky N."/>
            <person name="Piazza S."/>
            <person name="Reed J."/>
            <person name="Reid J.F."/>
            <person name="Ring B.Z."/>
            <person name="Ringwald M."/>
            <person name="Rost B."/>
            <person name="Ruan Y."/>
            <person name="Salzberg S.L."/>
            <person name="Sandelin A."/>
            <person name="Schneider C."/>
            <person name="Schoenbach C."/>
            <person name="Sekiguchi K."/>
            <person name="Semple C.A."/>
            <person name="Seno S."/>
            <person name="Sessa L."/>
            <person name="Sheng Y."/>
            <person name="Shibata Y."/>
            <person name="Shimada H."/>
            <person name="Shimada K."/>
            <person name="Silva D."/>
            <person name="Sinclair B."/>
            <person name="Sperling S."/>
            <person name="Stupka E."/>
            <person name="Sugiura K."/>
            <person name="Sultana R."/>
            <person name="Takenaka Y."/>
            <person name="Taki K."/>
            <person name="Tammoja K."/>
            <person name="Tan S.L."/>
            <person name="Tang S."/>
            <person name="Taylor M.S."/>
            <person name="Tegner J."/>
            <person name="Teichmann S.A."/>
            <person name="Ueda H.R."/>
            <person name="van Nimwegen E."/>
            <person name="Verardo R."/>
            <person name="Wei C.L."/>
            <person name="Yagi K."/>
            <person name="Yamanishi H."/>
            <person name="Zabarovsky E."/>
            <person name="Zhu S."/>
            <person name="Zimmer A."/>
            <person name="Hide W."/>
            <person name="Bult C."/>
            <person name="Grimmond S.M."/>
            <person name="Teasdale R.D."/>
            <person name="Liu E.T."/>
            <person name="Brusic V."/>
            <person name="Quackenbush J."/>
            <person name="Wahlestedt C."/>
            <person name="Mattick J.S."/>
            <person name="Hume D.A."/>
            <person name="Kai C."/>
            <person name="Sasaki D."/>
            <person name="Tomaru Y."/>
            <person name="Fukuda S."/>
            <person name="Kanamori-Katayama M."/>
            <person name="Suzuki M."/>
            <person name="Aoki J."/>
            <person name="Arakawa T."/>
            <person name="Iida J."/>
            <person name="Imamura K."/>
            <person name="Itoh M."/>
            <person name="Kato T."/>
            <person name="Kawaji H."/>
            <person name="Kawagashira N."/>
            <person name="Kawashima T."/>
            <person name="Kojima M."/>
            <person name="Kondo S."/>
            <person name="Konno H."/>
            <person name="Nakano K."/>
            <person name="Ninomiya N."/>
            <person name="Nishio T."/>
            <person name="Okada M."/>
            <person name="Plessy C."/>
            <person name="Shibata K."/>
            <person name="Shiraki T."/>
            <person name="Suzuki S."/>
            <person name="Tagami M."/>
            <person name="Waki K."/>
            <person name="Watahiki A."/>
            <person name="Okamura-Oho Y."/>
            <person name="Suzuki H."/>
            <person name="Kawai J."/>
            <person name="Hayashizaki Y."/>
        </authorList>
    </citation>
    <scope>NUCLEOTIDE SEQUENCE [LARGE SCALE MRNA] OF 405-937</scope>
    <source>
        <strain>C57BL/6J</strain>
        <tissue>Eye</tissue>
    </source>
</reference>
<reference key="5">
    <citation type="journal article" date="2001" name="J. Biol. Chem.">
        <title>The STAR/GSG family protein rSLM-2 regulates the selection of alternative splice sites.</title>
        <authorList>
            <person name="Stoss O."/>
            <person name="Olbrich M."/>
            <person name="Hartmann A.M."/>
            <person name="Koenig H."/>
            <person name="Memmott J."/>
            <person name="Andreadis A."/>
            <person name="Stamm S."/>
        </authorList>
    </citation>
    <scope>INTERACTION WITH CLK2</scope>
</reference>
<reference key="6">
    <citation type="journal article" date="2007" name="Science">
        <title>ATM and ATR substrate analysis reveals extensive protein networks responsive to DNA damage.</title>
        <authorList>
            <person name="Matsuoka S."/>
            <person name="Ballif B.A."/>
            <person name="Smogorzewska A."/>
            <person name="McDonald E.R. III"/>
            <person name="Hurov K.E."/>
            <person name="Luo J."/>
            <person name="Bakalarski C.E."/>
            <person name="Zhao Z."/>
            <person name="Solimini N."/>
            <person name="Lerenthal Y."/>
            <person name="Shiloh Y."/>
            <person name="Gygi S.P."/>
            <person name="Elledge S.J."/>
        </authorList>
    </citation>
    <scope>IDENTIFICATION BY MASS SPECTROMETRY [LARGE SCALE ANALYSIS]</scope>
    <source>
        <tissue>Embryonic fibroblast</tissue>
    </source>
</reference>
<reference key="7">
    <citation type="journal article" date="2009" name="BMB Rep.">
        <title>SAFB1, an RBMX-binding protein, is a newly identified regulator of hepatic SREBP-1c gene.</title>
        <authorList>
            <person name="Omura Y."/>
            <person name="Nishio Y."/>
            <person name="Takemoto T."/>
            <person name="Ikeuchi C."/>
            <person name="Sekine O."/>
            <person name="Morino K."/>
            <person name="Maeno Y."/>
            <person name="Obata T."/>
            <person name="Ugi S."/>
            <person name="Maegawa H."/>
            <person name="Kimura H."/>
            <person name="Kashiwagi A."/>
        </authorList>
    </citation>
    <scope>FUNCTION</scope>
    <scope>INTERACTION WITH RBMX</scope>
    <scope>ASSOCIATION WITH CHROMATIN</scope>
</reference>
<reference key="8">
    <citation type="journal article" date="2009" name="Immunity">
        <title>The phagosomal proteome in interferon-gamma-activated macrophages.</title>
        <authorList>
            <person name="Trost M."/>
            <person name="English L."/>
            <person name="Lemieux S."/>
            <person name="Courcelles M."/>
            <person name="Desjardins M."/>
            <person name="Thibault P."/>
        </authorList>
    </citation>
    <scope>PHOSPHORYLATION [LARGE SCALE ANALYSIS] AT SER-626</scope>
    <scope>IDENTIFICATION BY MASS SPECTROMETRY [LARGE SCALE ANALYSIS]</scope>
</reference>
<reference key="9">
    <citation type="journal article" date="2009" name="Mol. Cell. Proteomics">
        <title>Large scale localization of protein phosphorylation by use of electron capture dissociation mass spectrometry.</title>
        <authorList>
            <person name="Sweet S.M."/>
            <person name="Bailey C.M."/>
            <person name="Cunningham D.L."/>
            <person name="Heath J.K."/>
            <person name="Cooper H.J."/>
        </authorList>
    </citation>
    <scope>PHOSPHORYLATION [LARGE SCALE ANALYSIS] AT SER-626</scope>
    <scope>IDENTIFICATION BY MASS SPECTROMETRY [LARGE SCALE ANALYSIS]</scope>
    <source>
        <tissue>Embryonic fibroblast</tissue>
    </source>
</reference>
<reference key="10">
    <citation type="journal article" date="2010" name="Cell">
        <title>A tissue-specific atlas of mouse protein phosphorylation and expression.</title>
        <authorList>
            <person name="Huttlin E.L."/>
            <person name="Jedrychowski M.P."/>
            <person name="Elias J.E."/>
            <person name="Goswami T."/>
            <person name="Rad R."/>
            <person name="Beausoleil S.A."/>
            <person name="Villen J."/>
            <person name="Haas W."/>
            <person name="Sowa M.E."/>
            <person name="Gygi S.P."/>
        </authorList>
    </citation>
    <scope>PHOSPHORYLATION [LARGE SCALE ANALYSIS] AT SER-626</scope>
    <scope>IDENTIFICATION BY MASS SPECTROMETRY [LARGE SCALE ANALYSIS]</scope>
    <source>
        <tissue>Brown adipose tissue</tissue>
        <tissue>Kidney</tissue>
        <tissue>Lung</tissue>
        <tissue>Pancreas</tissue>
        <tissue>Spleen</tissue>
        <tissue>Testis</tissue>
    </source>
</reference>
<reference key="11">
    <citation type="journal article" date="2014" name="Mol. Cell. Proteomics">
        <title>Immunoaffinity enrichment and mass spectrometry analysis of protein methylation.</title>
        <authorList>
            <person name="Guo A."/>
            <person name="Gu H."/>
            <person name="Zhou J."/>
            <person name="Mulhern D."/>
            <person name="Wang Y."/>
            <person name="Lee K.A."/>
            <person name="Yang V."/>
            <person name="Aguiar M."/>
            <person name="Kornhauser J."/>
            <person name="Jia X."/>
            <person name="Ren J."/>
            <person name="Beausoleil S.A."/>
            <person name="Silva J.C."/>
            <person name="Vemulapalli V."/>
            <person name="Bedford M.T."/>
            <person name="Comb M.J."/>
        </authorList>
    </citation>
    <scope>METHYLATION [LARGE SCALE ANALYSIS] AT ARG-832; ARG-890; ARG-896; ARG-906 AND ARG-912</scope>
    <scope>IDENTIFICATION BY MASS SPECTROMETRY [LARGE SCALE ANALYSIS]</scope>
    <source>
        <tissue>Brain</tissue>
        <tissue>Embryo</tissue>
    </source>
</reference>
<proteinExistence type="evidence at protein level"/>
<protein>
    <recommendedName>
        <fullName>Scaffold attachment factor B1</fullName>
        <shortName>SAF-B1</shortName>
    </recommendedName>
</protein>
<feature type="initiator methionine" description="Removed" evidence="3">
    <location>
        <position position="1"/>
    </location>
</feature>
<feature type="chain" id="PRO_0000413022" description="Scaffold attachment factor B1">
    <location>
        <begin position="2"/>
        <end position="937"/>
    </location>
</feature>
<feature type="domain" description="SAP" evidence="6">
    <location>
        <begin position="31"/>
        <end position="65"/>
    </location>
</feature>
<feature type="domain" description="RRM" evidence="5">
    <location>
        <begin position="428"/>
        <end position="506"/>
    </location>
</feature>
<feature type="region of interest" description="Disordered" evidence="7">
    <location>
        <begin position="1"/>
        <end position="35"/>
    </location>
</feature>
<feature type="region of interest" description="Disordered" evidence="7">
    <location>
        <begin position="64"/>
        <end position="117"/>
    </location>
</feature>
<feature type="region of interest" description="Disordered" evidence="7">
    <location>
        <begin position="222"/>
        <end position="429"/>
    </location>
</feature>
<feature type="region of interest" description="Disordered" evidence="7">
    <location>
        <begin position="499"/>
        <end position="661"/>
    </location>
</feature>
<feature type="region of interest" description="Interaction with POLR2A; SFRS1; SFRS9 and SFRS10" evidence="2">
    <location>
        <begin position="550"/>
        <end position="814"/>
    </location>
</feature>
<feature type="region of interest" description="Interaction with SAFB2" evidence="1">
    <location>
        <begin position="621"/>
        <end position="937"/>
    </location>
</feature>
<feature type="region of interest" description="Disordered" evidence="7">
    <location>
        <begin position="684"/>
        <end position="738"/>
    </location>
</feature>
<feature type="region of interest" description="Disordered" evidence="7">
    <location>
        <begin position="771"/>
        <end position="937"/>
    </location>
</feature>
<feature type="coiled-coil region" evidence="4">
    <location>
        <begin position="652"/>
        <end position="726"/>
    </location>
</feature>
<feature type="short sequence motif" description="Nuclear localization signal" evidence="4">
    <location>
        <begin position="621"/>
        <end position="638"/>
    </location>
</feature>
<feature type="compositionally biased region" description="Low complexity" evidence="7">
    <location>
        <begin position="11"/>
        <end position="24"/>
    </location>
</feature>
<feature type="compositionally biased region" description="Acidic residues" evidence="7">
    <location>
        <begin position="67"/>
        <end position="77"/>
    </location>
</feature>
<feature type="compositionally biased region" description="Acidic residues" evidence="7">
    <location>
        <begin position="98"/>
        <end position="117"/>
    </location>
</feature>
<feature type="compositionally biased region" description="Basic and acidic residues" evidence="7">
    <location>
        <begin position="225"/>
        <end position="234"/>
    </location>
</feature>
<feature type="compositionally biased region" description="Acidic residues" evidence="7">
    <location>
        <begin position="268"/>
        <end position="287"/>
    </location>
</feature>
<feature type="compositionally biased region" description="Polar residues" evidence="7">
    <location>
        <begin position="341"/>
        <end position="356"/>
    </location>
</feature>
<feature type="compositionally biased region" description="Basic and acidic residues" evidence="7">
    <location>
        <begin position="370"/>
        <end position="380"/>
    </location>
</feature>
<feature type="compositionally biased region" description="Basic and acidic residues" evidence="7">
    <location>
        <begin position="412"/>
        <end position="423"/>
    </location>
</feature>
<feature type="compositionally biased region" description="Basic and acidic residues" evidence="7">
    <location>
        <begin position="499"/>
        <end position="573"/>
    </location>
</feature>
<feature type="compositionally biased region" description="Basic and acidic residues" evidence="7">
    <location>
        <begin position="581"/>
        <end position="592"/>
    </location>
</feature>
<feature type="compositionally biased region" description="Basic and acidic residues" evidence="7">
    <location>
        <begin position="603"/>
        <end position="661"/>
    </location>
</feature>
<feature type="compositionally biased region" description="Basic and acidic residues" evidence="7">
    <location>
        <begin position="771"/>
        <end position="818"/>
    </location>
</feature>
<feature type="compositionally biased region" description="Basic and acidic residues" evidence="7">
    <location>
        <begin position="838"/>
        <end position="854"/>
    </location>
</feature>
<feature type="compositionally biased region" description="Basic and acidic residues" evidence="7">
    <location>
        <begin position="863"/>
        <end position="873"/>
    </location>
</feature>
<feature type="compositionally biased region" description="Basic and acidic residues" evidence="7">
    <location>
        <begin position="927"/>
        <end position="937"/>
    </location>
</feature>
<feature type="modified residue" description="N-acetylalanine" evidence="3">
    <location>
        <position position="2"/>
    </location>
</feature>
<feature type="modified residue" description="Phosphoserine" evidence="2">
    <location>
        <position position="24"/>
    </location>
</feature>
<feature type="modified residue" description="Phosphoserine" evidence="3">
    <location>
        <position position="55"/>
    </location>
</feature>
<feature type="modified residue" description="Phosphoserine" evidence="3">
    <location>
        <position position="79"/>
    </location>
</feature>
<feature type="modified residue" description="Phosphothreonine" evidence="3">
    <location>
        <position position="188"/>
    </location>
</feature>
<feature type="modified residue" description="Phosphoserine" evidence="3">
    <location>
        <position position="195"/>
    </location>
</feature>
<feature type="modified residue" description="Phosphoserine" evidence="3">
    <location>
        <position position="197"/>
    </location>
</feature>
<feature type="modified residue" description="Phosphoserine" evidence="2">
    <location>
        <position position="209"/>
    </location>
</feature>
<feature type="modified residue" description="Phosphoserine" evidence="3">
    <location>
        <position position="405"/>
    </location>
</feature>
<feature type="modified residue" description="Phosphoserine" evidence="3">
    <location>
        <position position="406"/>
    </location>
</feature>
<feature type="modified residue" description="Phosphoserine" evidence="3">
    <location>
        <position position="437"/>
    </location>
</feature>
<feature type="modified residue" description="Phosphoserine" evidence="3">
    <location>
        <position position="602"/>
    </location>
</feature>
<feature type="modified residue" description="Phosphoserine" evidence="3">
    <location>
        <position position="604"/>
    </location>
</feature>
<feature type="modified residue" description="Phosphoserine" evidence="3">
    <location>
        <position position="623"/>
    </location>
</feature>
<feature type="modified residue" description="Phosphoserine" evidence="10 11 12">
    <location>
        <position position="626"/>
    </location>
</feature>
<feature type="modified residue" description="N6-acetyllysine" evidence="3">
    <location>
        <position position="629"/>
    </location>
</feature>
<feature type="modified residue" description="Omega-N-methylarginine" evidence="13">
    <location>
        <position position="832"/>
    </location>
</feature>
<feature type="modified residue" description="Asymmetric dimethylarginine" evidence="13">
    <location>
        <position position="890"/>
    </location>
</feature>
<feature type="modified residue" description="Asymmetric dimethylarginine" evidence="13">
    <location>
        <position position="896"/>
    </location>
</feature>
<feature type="modified residue" description="Asymmetric dimethylarginine" evidence="13">
    <location>
        <position position="906"/>
    </location>
</feature>
<feature type="modified residue" description="Asymmetric dimethylarginine" evidence="13">
    <location>
        <position position="912"/>
    </location>
</feature>
<feature type="cross-link" description="Glycyl lysine isopeptide (Lys-Gly) (interchain with G-Cter in SUMO2)" evidence="3">
    <location>
        <position position="172"/>
    </location>
</feature>
<feature type="cross-link" description="Glycyl lysine isopeptide (Lys-Gly) (interchain with G-Cter in SUMO2)" evidence="3">
    <location>
        <position position="186"/>
    </location>
</feature>
<feature type="cross-link" description="Glycyl lysine isopeptide (Lys-Gly) (interchain with G-Cter in SUMO)" evidence="1">
    <location>
        <position position="231"/>
    </location>
</feature>
<feature type="cross-link" description="Glycyl lysine isopeptide (Lys-Gly) (interchain with G-Cter in SUMO)" evidence="1">
    <location>
        <position position="316"/>
    </location>
</feature>
<feature type="cross-link" description="Glycyl lysine isopeptide (Lys-Gly) (interchain with G-Cter in SUMO2)" evidence="3">
    <location>
        <position position="403"/>
    </location>
</feature>
<feature type="cross-link" description="Glycyl lysine isopeptide (Lys-Gly) (interchain with G-Cter in SUMO2)" evidence="3">
    <location>
        <position position="414"/>
    </location>
</feature>
<feature type="cross-link" description="Glycyl lysine isopeptide (Lys-Gly) (interchain with G-Cter in SUMO2)" evidence="3">
    <location>
        <position position="505"/>
    </location>
</feature>
<feature type="cross-link" description="Glycyl lysine isopeptide (Lys-Gly) (interchain with G-Cter in SUMO2)" evidence="3">
    <location>
        <position position="536"/>
    </location>
</feature>
<feature type="cross-link" description="Glycyl lysine isopeptide (Lys-Gly) (interchain with G-Cter in SUMO2)" evidence="3">
    <location>
        <position position="565"/>
    </location>
</feature>
<feature type="cross-link" description="Glycyl lysine isopeptide (Lys-Gly) (interchain with G-Cter in SUMO2)" evidence="3">
    <location>
        <position position="592"/>
    </location>
</feature>
<feature type="cross-link" description="Glycyl lysine isopeptide (Lys-Gly) (interchain with G-Cter in SUMO1); alternate" evidence="3">
    <location>
        <position position="600"/>
    </location>
</feature>
<feature type="cross-link" description="Glycyl lysine isopeptide (Lys-Gly) (interchain with G-Cter in SUMO2); alternate" evidence="3">
    <location>
        <position position="600"/>
    </location>
</feature>
<feature type="cross-link" description="Glycyl lysine isopeptide (Lys-Gly) (interchain with G-Cter in SUMO2)" evidence="3">
    <location>
        <position position="869"/>
    </location>
</feature>
<sequence>MAETLSGLGDASAAGAAAVSSAASETGTRRLSDLRVIDLRAELKKRNLDSSGNKSVLMERLKKAIEDEGGNPDEIEVTSECNKKMPKRPSKGRKPEDEGVEDNGLEENSGDGQEDVETSLENLQDMDMMDISVLDEADIDNGSVADCVEEEEEATLPEGLADSTELVEGDLKGLPEQLQEHAIDDKDTVNNVDTSSSDFTMLQEMEEASLEPENEKILDILGETCKSEPVKEEGSELEQPFAQATSSVGPDRKLAEEEDLFESCGHPEEEEEEEEEDQEEEQEEEGDLALASSSKSESPSTRCQWSEADAPLAVVKREPADAPGGGTGMDREPVGLEEPVEQSSTAAQLPEATSQELVRAPTAALSPEPQDSKEDVKKFAFDACNDVPAPPKESSASEGADQKMSSVEEDSDTKRLSREEKGRSSCGRNFWVSGLSSTTRATDLKNLFSRYGKVVGAKVVTNARSPGARCYGFVTMSTAEEATKCISHLHKTELHGKMISVEKAKSEPTGKRVPDRRDGDSKKEKASTSDRSANLKREEKGERKDDAKKTDDGSTEKSKDADDQKPGPSERSRTTKSGSRGTERTVVMDKSKGVPVISVKTSGSKERASKSQDRKSASREKRSVVSFDKVKESRKSRDSESRRERERSEREQRLQAQWEREERERLEIARERLAFHRHRLERERMERERLERERMHVEQERRREQERIHREREELRRQQELRYEQERRPAVRRPYEVDGRRDDAYWPEAKRAALDDRYHSDFSRQDRFHDFDHRDRGRYPNHSVDRREGSRSMMGDREGQHYPERHGGPERHGRDSRDGWGYGSNKRLSEGRGLPPPPRRDWGEHGRRLEDDRAWQGTADGGMMERDHKRWQGGERSMSGHSGPGHMMNRGGMSGRGSFAPGGASRGHVIPRGGMQAGFGGQSRGSRPSDARFTRRY</sequence>